<accession>Q8NH93</accession>
<accession>B2RNF4</accession>
<accession>Q6IFN1</accession>
<proteinExistence type="evidence at protein level"/>
<gene>
    <name type="primary">OR1L3</name>
</gene>
<keyword id="KW-1003">Cell membrane</keyword>
<keyword id="KW-1015">Disulfide bond</keyword>
<keyword id="KW-0297">G-protein coupled receptor</keyword>
<keyword id="KW-0325">Glycoprotein</keyword>
<keyword id="KW-0472">Membrane</keyword>
<keyword id="KW-0552">Olfaction</keyword>
<keyword id="KW-0675">Receptor</keyword>
<keyword id="KW-1185">Reference proteome</keyword>
<keyword id="KW-0716">Sensory transduction</keyword>
<keyword id="KW-0807">Transducer</keyword>
<keyword id="KW-0812">Transmembrane</keyword>
<keyword id="KW-1133">Transmembrane helix</keyword>
<organism>
    <name type="scientific">Homo sapiens</name>
    <name type="common">Human</name>
    <dbReference type="NCBI Taxonomy" id="9606"/>
    <lineage>
        <taxon>Eukaryota</taxon>
        <taxon>Metazoa</taxon>
        <taxon>Chordata</taxon>
        <taxon>Craniata</taxon>
        <taxon>Vertebrata</taxon>
        <taxon>Euteleostomi</taxon>
        <taxon>Mammalia</taxon>
        <taxon>Eutheria</taxon>
        <taxon>Euarchontoglires</taxon>
        <taxon>Primates</taxon>
        <taxon>Haplorrhini</taxon>
        <taxon>Catarrhini</taxon>
        <taxon>Hominidae</taxon>
        <taxon>Homo</taxon>
    </lineage>
</organism>
<feature type="chain" id="PRO_0000150443" description="Olfactory receptor 1L3">
    <location>
        <begin position="1"/>
        <end position="324"/>
    </location>
</feature>
<feature type="topological domain" description="Extracellular" evidence="1">
    <location>
        <begin position="1"/>
        <end position="25"/>
    </location>
</feature>
<feature type="transmembrane region" description="Helical; Name=1" evidence="1">
    <location>
        <begin position="26"/>
        <end position="49"/>
    </location>
</feature>
<feature type="topological domain" description="Cytoplasmic" evidence="1">
    <location>
        <begin position="50"/>
        <end position="57"/>
    </location>
</feature>
<feature type="transmembrane region" description="Helical; Name=2" evidence="1">
    <location>
        <begin position="58"/>
        <end position="79"/>
    </location>
</feature>
<feature type="topological domain" description="Extracellular" evidence="1">
    <location>
        <begin position="80"/>
        <end position="100"/>
    </location>
</feature>
<feature type="transmembrane region" description="Helical; Name=3" evidence="1">
    <location>
        <begin position="101"/>
        <end position="120"/>
    </location>
</feature>
<feature type="topological domain" description="Cytoplasmic" evidence="1">
    <location>
        <begin position="121"/>
        <end position="139"/>
    </location>
</feature>
<feature type="transmembrane region" description="Helical; Name=4" evidence="1">
    <location>
        <begin position="140"/>
        <end position="158"/>
    </location>
</feature>
<feature type="topological domain" description="Extracellular" evidence="1">
    <location>
        <begin position="159"/>
        <end position="196"/>
    </location>
</feature>
<feature type="transmembrane region" description="Helical; Name=5" evidence="1">
    <location>
        <begin position="197"/>
        <end position="219"/>
    </location>
</feature>
<feature type="topological domain" description="Cytoplasmic" evidence="1">
    <location>
        <begin position="220"/>
        <end position="236"/>
    </location>
</feature>
<feature type="transmembrane region" description="Helical; Name=6" evidence="1">
    <location>
        <begin position="237"/>
        <end position="259"/>
    </location>
</feature>
<feature type="topological domain" description="Extracellular" evidence="1">
    <location>
        <begin position="260"/>
        <end position="271"/>
    </location>
</feature>
<feature type="transmembrane region" description="Helical; Name=7" evidence="1">
    <location>
        <begin position="272"/>
        <end position="291"/>
    </location>
</feature>
<feature type="topological domain" description="Cytoplasmic" evidence="1">
    <location>
        <begin position="292"/>
        <end position="324"/>
    </location>
</feature>
<feature type="glycosylation site" description="N-linked (GlcNAc...) asparagine" evidence="1">
    <location>
        <position position="5"/>
    </location>
</feature>
<feature type="disulfide bond" evidence="2">
    <location>
        <begin position="97"/>
        <end position="189"/>
    </location>
</feature>
<feature type="sequence variant" id="VAR_059979" description="In dbSNP:rs12379744.">
    <original>R</original>
    <variation>G</variation>
    <location>
        <position position="54"/>
    </location>
</feature>
<feature type="sequence variant" id="VAR_034169" description="In dbSNP:rs16912096.">
    <original>V</original>
    <variation>A</variation>
    <location>
        <position position="106"/>
    </location>
</feature>
<feature type="sequence variant" id="VAR_034170" description="In dbSNP:rs16912099.">
    <original>N</original>
    <variation>D</variation>
    <location>
        <position position="121"/>
    </location>
</feature>
<protein>
    <recommendedName>
        <fullName>Olfactory receptor 1L3</fullName>
    </recommendedName>
    <alternativeName>
        <fullName>Olfactory receptor 9-D</fullName>
        <shortName>OR9-D</shortName>
    </alternativeName>
    <alternativeName>
        <fullName>Olfactory receptor OR9-28</fullName>
    </alternativeName>
</protein>
<dbReference type="EMBL" id="AB065492">
    <property type="protein sequence ID" value="BAC05744.1"/>
    <property type="molecule type" value="Genomic_DNA"/>
</dbReference>
<dbReference type="EMBL" id="AL162254">
    <property type="status" value="NOT_ANNOTATED_CDS"/>
    <property type="molecule type" value="Genomic_DNA"/>
</dbReference>
<dbReference type="EMBL" id="CH471090">
    <property type="protein sequence ID" value="EAW87541.1"/>
    <property type="molecule type" value="Genomic_DNA"/>
</dbReference>
<dbReference type="EMBL" id="BC136857">
    <property type="protein sequence ID" value="AAI36858.1"/>
    <property type="molecule type" value="mRNA"/>
</dbReference>
<dbReference type="EMBL" id="BC136859">
    <property type="protein sequence ID" value="AAI36860.1"/>
    <property type="molecule type" value="mRNA"/>
</dbReference>
<dbReference type="EMBL" id="BK004231">
    <property type="protein sequence ID" value="DAA04629.1"/>
    <property type="molecule type" value="Genomic_DNA"/>
</dbReference>
<dbReference type="CCDS" id="CCDS35128.1"/>
<dbReference type="RefSeq" id="NP_001005234.1">
    <property type="nucleotide sequence ID" value="NM_001005234.1"/>
</dbReference>
<dbReference type="SMR" id="Q8NH93"/>
<dbReference type="BioGRID" id="117803">
    <property type="interactions" value="3"/>
</dbReference>
<dbReference type="FunCoup" id="Q8NH93">
    <property type="interactions" value="456"/>
</dbReference>
<dbReference type="IntAct" id="Q8NH93">
    <property type="interactions" value="1"/>
</dbReference>
<dbReference type="STRING" id="9606.ENSP00000302863"/>
<dbReference type="GlyCosmos" id="Q8NH93">
    <property type="glycosylation" value="1 site, No reported glycans"/>
</dbReference>
<dbReference type="GlyGen" id="Q8NH93">
    <property type="glycosylation" value="1 site"/>
</dbReference>
<dbReference type="BioMuta" id="OR1L3"/>
<dbReference type="DMDM" id="38372830"/>
<dbReference type="MassIVE" id="Q8NH93"/>
<dbReference type="PaxDb" id="9606-ENSP00000302863"/>
<dbReference type="PeptideAtlas" id="Q8NH93"/>
<dbReference type="ProteomicsDB" id="73689"/>
<dbReference type="Antibodypedia" id="72098">
    <property type="antibodies" value="27 antibodies from 17 providers"/>
</dbReference>
<dbReference type="DNASU" id="26735"/>
<dbReference type="Ensembl" id="ENST00000304820.5">
    <property type="protein sequence ID" value="ENSP00000302863.2"/>
    <property type="gene ID" value="ENSG00000171481.5"/>
</dbReference>
<dbReference type="GeneID" id="26735"/>
<dbReference type="KEGG" id="hsa:26735"/>
<dbReference type="MANE-Select" id="ENST00000304820.5">
    <property type="protein sequence ID" value="ENSP00000302863.2"/>
    <property type="RefSeq nucleotide sequence ID" value="NM_001005234.1"/>
    <property type="RefSeq protein sequence ID" value="NP_001005234.1"/>
</dbReference>
<dbReference type="UCSC" id="uc011lzb.2">
    <property type="organism name" value="human"/>
</dbReference>
<dbReference type="AGR" id="HGNC:8215"/>
<dbReference type="CTD" id="26735"/>
<dbReference type="GeneCards" id="OR1L3"/>
<dbReference type="HGNC" id="HGNC:8215">
    <property type="gene designation" value="OR1L3"/>
</dbReference>
<dbReference type="HPA" id="ENSG00000171481">
    <property type="expression patterns" value="Not detected"/>
</dbReference>
<dbReference type="neXtProt" id="NX_Q8NH93"/>
<dbReference type="PharmGKB" id="PA32085"/>
<dbReference type="VEuPathDB" id="HostDB:ENSG00000171481"/>
<dbReference type="eggNOG" id="ENOG502T9M9">
    <property type="taxonomic scope" value="Eukaryota"/>
</dbReference>
<dbReference type="GeneTree" id="ENSGT00940000163223"/>
<dbReference type="HOGENOM" id="CLU_012526_1_0_1"/>
<dbReference type="InParanoid" id="Q8NH93"/>
<dbReference type="OMA" id="TNKICGP"/>
<dbReference type="OrthoDB" id="8772365at2759"/>
<dbReference type="PAN-GO" id="Q8NH93">
    <property type="GO annotations" value="3 GO annotations based on evolutionary models"/>
</dbReference>
<dbReference type="PhylomeDB" id="Q8NH93"/>
<dbReference type="TreeFam" id="TF341149"/>
<dbReference type="PathwayCommons" id="Q8NH93"/>
<dbReference type="Reactome" id="R-HSA-9752946">
    <property type="pathway name" value="Expression and translocation of olfactory receptors"/>
</dbReference>
<dbReference type="BioGRID-ORCS" id="26735">
    <property type="hits" value="5 hits in 735 CRISPR screens"/>
</dbReference>
<dbReference type="GeneWiki" id="OR1L3"/>
<dbReference type="GenomeRNAi" id="26735"/>
<dbReference type="Pharos" id="Q8NH93">
    <property type="development level" value="Tdark"/>
</dbReference>
<dbReference type="PRO" id="PR:Q8NH93"/>
<dbReference type="Proteomes" id="UP000005640">
    <property type="component" value="Chromosome 9"/>
</dbReference>
<dbReference type="RNAct" id="Q8NH93">
    <property type="molecule type" value="protein"/>
</dbReference>
<dbReference type="Bgee" id="ENSG00000171481">
    <property type="expression patterns" value="Expressed in anterior cingulate cortex"/>
</dbReference>
<dbReference type="ExpressionAtlas" id="Q8NH93">
    <property type="expression patterns" value="baseline and differential"/>
</dbReference>
<dbReference type="GO" id="GO:0005886">
    <property type="term" value="C:plasma membrane"/>
    <property type="evidence" value="ECO:0000318"/>
    <property type="project" value="GO_Central"/>
</dbReference>
<dbReference type="GO" id="GO:0004930">
    <property type="term" value="F:G protein-coupled receptor activity"/>
    <property type="evidence" value="ECO:0007669"/>
    <property type="project" value="UniProtKB-KW"/>
</dbReference>
<dbReference type="GO" id="GO:0004984">
    <property type="term" value="F:olfactory receptor activity"/>
    <property type="evidence" value="ECO:0000318"/>
    <property type="project" value="GO_Central"/>
</dbReference>
<dbReference type="GO" id="GO:0007165">
    <property type="term" value="P:signal transduction"/>
    <property type="evidence" value="ECO:0000318"/>
    <property type="project" value="GO_Central"/>
</dbReference>
<dbReference type="CDD" id="cd15235">
    <property type="entry name" value="7tmA_OR1A-like"/>
    <property type="match status" value="1"/>
</dbReference>
<dbReference type="FunFam" id="1.10.1220.70:FF:000001">
    <property type="entry name" value="Olfactory receptor"/>
    <property type="match status" value="1"/>
</dbReference>
<dbReference type="FunFam" id="1.20.1070.10:FF:000009">
    <property type="entry name" value="Olfactory receptor"/>
    <property type="match status" value="1"/>
</dbReference>
<dbReference type="Gene3D" id="1.20.1070.10">
    <property type="entry name" value="Rhodopsin 7-helix transmembrane proteins"/>
    <property type="match status" value="1"/>
</dbReference>
<dbReference type="InterPro" id="IPR000276">
    <property type="entry name" value="GPCR_Rhodpsn"/>
</dbReference>
<dbReference type="InterPro" id="IPR017452">
    <property type="entry name" value="GPCR_Rhodpsn_7TM"/>
</dbReference>
<dbReference type="InterPro" id="IPR000725">
    <property type="entry name" value="Olfact_rcpt"/>
</dbReference>
<dbReference type="PANTHER" id="PTHR48001">
    <property type="entry name" value="OLFACTORY RECEPTOR"/>
    <property type="match status" value="1"/>
</dbReference>
<dbReference type="Pfam" id="PF13853">
    <property type="entry name" value="7tm_4"/>
    <property type="match status" value="1"/>
</dbReference>
<dbReference type="PRINTS" id="PR00237">
    <property type="entry name" value="GPCRRHODOPSN"/>
</dbReference>
<dbReference type="PRINTS" id="PR00245">
    <property type="entry name" value="OLFACTORYR"/>
</dbReference>
<dbReference type="SMART" id="SM01381">
    <property type="entry name" value="7TM_GPCR_Srsx"/>
    <property type="match status" value="1"/>
</dbReference>
<dbReference type="SUPFAM" id="SSF81321">
    <property type="entry name" value="Family A G protein-coupled receptor-like"/>
    <property type="match status" value="1"/>
</dbReference>
<dbReference type="PROSITE" id="PS00237">
    <property type="entry name" value="G_PROTEIN_RECEP_F1_1"/>
    <property type="match status" value="1"/>
</dbReference>
<dbReference type="PROSITE" id="PS50262">
    <property type="entry name" value="G_PROTEIN_RECEP_F1_2"/>
    <property type="match status" value="1"/>
</dbReference>
<reference key="1">
    <citation type="submission" date="2001-07" db="EMBL/GenBank/DDBJ databases">
        <title>Genome-wide discovery and analysis of human seven transmembrane helix receptor genes.</title>
        <authorList>
            <person name="Suwa M."/>
            <person name="Sato T."/>
            <person name="Okouchi I."/>
            <person name="Arita M."/>
            <person name="Futami K."/>
            <person name="Matsumoto S."/>
            <person name="Tsutsumi S."/>
            <person name="Aburatani H."/>
            <person name="Asai K."/>
            <person name="Akiyama Y."/>
        </authorList>
    </citation>
    <scope>NUCLEOTIDE SEQUENCE [GENOMIC DNA]</scope>
</reference>
<reference key="2">
    <citation type="journal article" date="2004" name="Nature">
        <title>DNA sequence and analysis of human chromosome 9.</title>
        <authorList>
            <person name="Humphray S.J."/>
            <person name="Oliver K."/>
            <person name="Hunt A.R."/>
            <person name="Plumb R.W."/>
            <person name="Loveland J.E."/>
            <person name="Howe K.L."/>
            <person name="Andrews T.D."/>
            <person name="Searle S."/>
            <person name="Hunt S.E."/>
            <person name="Scott C.E."/>
            <person name="Jones M.C."/>
            <person name="Ainscough R."/>
            <person name="Almeida J.P."/>
            <person name="Ambrose K.D."/>
            <person name="Ashwell R.I.S."/>
            <person name="Babbage A.K."/>
            <person name="Babbage S."/>
            <person name="Bagguley C.L."/>
            <person name="Bailey J."/>
            <person name="Banerjee R."/>
            <person name="Barker D.J."/>
            <person name="Barlow K.F."/>
            <person name="Bates K."/>
            <person name="Beasley H."/>
            <person name="Beasley O."/>
            <person name="Bird C.P."/>
            <person name="Bray-Allen S."/>
            <person name="Brown A.J."/>
            <person name="Brown J.Y."/>
            <person name="Burford D."/>
            <person name="Burrill W."/>
            <person name="Burton J."/>
            <person name="Carder C."/>
            <person name="Carter N.P."/>
            <person name="Chapman J.C."/>
            <person name="Chen Y."/>
            <person name="Clarke G."/>
            <person name="Clark S.Y."/>
            <person name="Clee C.M."/>
            <person name="Clegg S."/>
            <person name="Collier R.E."/>
            <person name="Corby N."/>
            <person name="Crosier M."/>
            <person name="Cummings A.T."/>
            <person name="Davies J."/>
            <person name="Dhami P."/>
            <person name="Dunn M."/>
            <person name="Dutta I."/>
            <person name="Dyer L.W."/>
            <person name="Earthrowl M.E."/>
            <person name="Faulkner L."/>
            <person name="Fleming C.J."/>
            <person name="Frankish A."/>
            <person name="Frankland J.A."/>
            <person name="French L."/>
            <person name="Fricker D.G."/>
            <person name="Garner P."/>
            <person name="Garnett J."/>
            <person name="Ghori J."/>
            <person name="Gilbert J.G.R."/>
            <person name="Glison C."/>
            <person name="Grafham D.V."/>
            <person name="Gribble S."/>
            <person name="Griffiths C."/>
            <person name="Griffiths-Jones S."/>
            <person name="Grocock R."/>
            <person name="Guy J."/>
            <person name="Hall R.E."/>
            <person name="Hammond S."/>
            <person name="Harley J.L."/>
            <person name="Harrison E.S.I."/>
            <person name="Hart E.A."/>
            <person name="Heath P.D."/>
            <person name="Henderson C.D."/>
            <person name="Hopkins B.L."/>
            <person name="Howard P.J."/>
            <person name="Howden P.J."/>
            <person name="Huckle E."/>
            <person name="Johnson C."/>
            <person name="Johnson D."/>
            <person name="Joy A.A."/>
            <person name="Kay M."/>
            <person name="Keenan S."/>
            <person name="Kershaw J.K."/>
            <person name="Kimberley A.M."/>
            <person name="King A."/>
            <person name="Knights A."/>
            <person name="Laird G.K."/>
            <person name="Langford C."/>
            <person name="Lawlor S."/>
            <person name="Leongamornlert D.A."/>
            <person name="Leversha M."/>
            <person name="Lloyd C."/>
            <person name="Lloyd D.M."/>
            <person name="Lovell J."/>
            <person name="Martin S."/>
            <person name="Mashreghi-Mohammadi M."/>
            <person name="Matthews L."/>
            <person name="McLaren S."/>
            <person name="McLay K.E."/>
            <person name="McMurray A."/>
            <person name="Milne S."/>
            <person name="Nickerson T."/>
            <person name="Nisbett J."/>
            <person name="Nordsiek G."/>
            <person name="Pearce A.V."/>
            <person name="Peck A.I."/>
            <person name="Porter K.M."/>
            <person name="Pandian R."/>
            <person name="Pelan S."/>
            <person name="Phillimore B."/>
            <person name="Povey S."/>
            <person name="Ramsey Y."/>
            <person name="Rand V."/>
            <person name="Scharfe M."/>
            <person name="Sehra H.K."/>
            <person name="Shownkeen R."/>
            <person name="Sims S.K."/>
            <person name="Skuce C.D."/>
            <person name="Smith M."/>
            <person name="Steward C.A."/>
            <person name="Swarbreck D."/>
            <person name="Sycamore N."/>
            <person name="Tester J."/>
            <person name="Thorpe A."/>
            <person name="Tracey A."/>
            <person name="Tromans A."/>
            <person name="Thomas D.W."/>
            <person name="Wall M."/>
            <person name="Wallis J.M."/>
            <person name="West A.P."/>
            <person name="Whitehead S.L."/>
            <person name="Willey D.L."/>
            <person name="Williams S.A."/>
            <person name="Wilming L."/>
            <person name="Wray P.W."/>
            <person name="Young L."/>
            <person name="Ashurst J.L."/>
            <person name="Coulson A."/>
            <person name="Blocker H."/>
            <person name="Durbin R.M."/>
            <person name="Sulston J.E."/>
            <person name="Hubbard T."/>
            <person name="Jackson M.J."/>
            <person name="Bentley D.R."/>
            <person name="Beck S."/>
            <person name="Rogers J."/>
            <person name="Dunham I."/>
        </authorList>
    </citation>
    <scope>NUCLEOTIDE SEQUENCE [LARGE SCALE GENOMIC DNA]</scope>
</reference>
<reference key="3">
    <citation type="submission" date="2005-07" db="EMBL/GenBank/DDBJ databases">
        <authorList>
            <person name="Mural R.J."/>
            <person name="Istrail S."/>
            <person name="Sutton G.G."/>
            <person name="Florea L."/>
            <person name="Halpern A.L."/>
            <person name="Mobarry C.M."/>
            <person name="Lippert R."/>
            <person name="Walenz B."/>
            <person name="Shatkay H."/>
            <person name="Dew I."/>
            <person name="Miller J.R."/>
            <person name="Flanigan M.J."/>
            <person name="Edwards N.J."/>
            <person name="Bolanos R."/>
            <person name="Fasulo D."/>
            <person name="Halldorsson B.V."/>
            <person name="Hannenhalli S."/>
            <person name="Turner R."/>
            <person name="Yooseph S."/>
            <person name="Lu F."/>
            <person name="Nusskern D.R."/>
            <person name="Shue B.C."/>
            <person name="Zheng X.H."/>
            <person name="Zhong F."/>
            <person name="Delcher A.L."/>
            <person name="Huson D.H."/>
            <person name="Kravitz S.A."/>
            <person name="Mouchard L."/>
            <person name="Reinert K."/>
            <person name="Remington K.A."/>
            <person name="Clark A.G."/>
            <person name="Waterman M.S."/>
            <person name="Eichler E.E."/>
            <person name="Adams M.D."/>
            <person name="Hunkapiller M.W."/>
            <person name="Myers E.W."/>
            <person name="Venter J.C."/>
        </authorList>
    </citation>
    <scope>NUCLEOTIDE SEQUENCE [LARGE SCALE GENOMIC DNA]</scope>
</reference>
<reference key="4">
    <citation type="journal article" date="2004" name="Genome Res.">
        <title>The status, quality, and expansion of the NIH full-length cDNA project: the Mammalian Gene Collection (MGC).</title>
        <authorList>
            <consortium name="The MGC Project Team"/>
        </authorList>
    </citation>
    <scope>NUCLEOTIDE SEQUENCE [LARGE SCALE MRNA]</scope>
</reference>
<reference key="5">
    <citation type="journal article" date="2004" name="Proc. Natl. Acad. Sci. U.S.A.">
        <title>The human olfactory receptor gene family.</title>
        <authorList>
            <person name="Malnic B."/>
            <person name="Godfrey P.A."/>
            <person name="Buck L.B."/>
        </authorList>
    </citation>
    <scope>IDENTIFICATION</scope>
</reference>
<reference key="6">
    <citation type="journal article" date="2004" name="Proc. Natl. Acad. Sci. U.S.A.">
        <authorList>
            <person name="Malnic B."/>
            <person name="Godfrey P.A."/>
            <person name="Buck L.B."/>
        </authorList>
    </citation>
    <scope>ERRATUM OF PUBMED:14983052</scope>
</reference>
<name>OR1L3_HUMAN</name>
<comment type="function">
    <text evidence="3">Odorant receptor.</text>
</comment>
<comment type="interaction">
    <interactant intactId="EBI-13080292">
        <id>Q8NH93</id>
    </interactant>
    <interactant intactId="EBI-9087860">
        <id>P32243-2</id>
        <label>OTX2</label>
    </interactant>
    <organismsDiffer>false</organismsDiffer>
    <experiments>3</experiments>
</comment>
<comment type="subcellular location">
    <subcellularLocation>
        <location>Cell membrane</location>
        <topology>Multi-pass membrane protein</topology>
    </subcellularLocation>
</comment>
<comment type="similarity">
    <text evidence="2">Belongs to the G-protein coupled receptor 1 family.</text>
</comment>
<comment type="online information" name="Human Olfactory Receptor Data Exploratorium (HORDE)">
    <link uri="http://genome.weizmann.ac.il/horde/card/index/symbol:OR1L3"/>
</comment>
<sequence>MGMSNLTRLSEFILLGLSSRSEDQRPLFALFLIIYLVTLMGNLLIILAIHSDPRLQNPMYFFLSILSFADICYTTVIVPKMLVNFLSEKKTISYAECLAQMYFFLVFGNIDSYLLAAMAINRCVAICNPFHYVTVMNRRCCVLLLAFPITFSYFHSLLHVLLVNRLTFCTSNVIHHFFCDVNPVLKLSCSSTFVNEIVAMTEGLASVMAPFVCIIISYLRILIAVLKIPSAAGKHKAFSTCSSHLTVVILFYGSISYVYLQPLSSYTVKDRIATINYTVLTSVLNPFIYSLRNKDMKRGLQKLINKIKSQMSRFSTKTNKICGP</sequence>
<evidence type="ECO:0000255" key="1"/>
<evidence type="ECO:0000255" key="2">
    <source>
        <dbReference type="PROSITE-ProRule" id="PRU00521"/>
    </source>
</evidence>
<evidence type="ECO:0000305" key="3"/>